<evidence type="ECO:0000255" key="1">
    <source>
        <dbReference type="HAMAP-Rule" id="MF_00388"/>
    </source>
</evidence>
<proteinExistence type="inferred from homology"/>
<keyword id="KW-0378">Hydrolase</keyword>
<keyword id="KW-0441">Lipid A biosynthesis</keyword>
<keyword id="KW-0444">Lipid biosynthesis</keyword>
<keyword id="KW-0443">Lipid metabolism</keyword>
<keyword id="KW-0479">Metal-binding</keyword>
<keyword id="KW-0862">Zinc</keyword>
<gene>
    <name evidence="1" type="primary">lpxC</name>
    <name type="ordered locus">Sbal195_0418</name>
</gene>
<dbReference type="EC" id="3.5.1.108" evidence="1"/>
<dbReference type="EMBL" id="CP000891">
    <property type="protein sequence ID" value="ABX47599.1"/>
    <property type="molecule type" value="Genomic_DNA"/>
</dbReference>
<dbReference type="RefSeq" id="WP_011845621.1">
    <property type="nucleotide sequence ID" value="NC_009997.1"/>
</dbReference>
<dbReference type="SMR" id="A9KY34"/>
<dbReference type="GeneID" id="11774539"/>
<dbReference type="KEGG" id="sbn:Sbal195_0418"/>
<dbReference type="HOGENOM" id="CLU_046528_1_0_6"/>
<dbReference type="UniPathway" id="UPA00359">
    <property type="reaction ID" value="UER00478"/>
</dbReference>
<dbReference type="Proteomes" id="UP000000770">
    <property type="component" value="Chromosome"/>
</dbReference>
<dbReference type="GO" id="GO:0016020">
    <property type="term" value="C:membrane"/>
    <property type="evidence" value="ECO:0007669"/>
    <property type="project" value="GOC"/>
</dbReference>
<dbReference type="GO" id="GO:0046872">
    <property type="term" value="F:metal ion binding"/>
    <property type="evidence" value="ECO:0007669"/>
    <property type="project" value="UniProtKB-KW"/>
</dbReference>
<dbReference type="GO" id="GO:0103117">
    <property type="term" value="F:UDP-3-O-acyl-N-acetylglucosamine deacetylase activity"/>
    <property type="evidence" value="ECO:0007669"/>
    <property type="project" value="UniProtKB-UniRule"/>
</dbReference>
<dbReference type="GO" id="GO:0009245">
    <property type="term" value="P:lipid A biosynthetic process"/>
    <property type="evidence" value="ECO:0007669"/>
    <property type="project" value="UniProtKB-UniRule"/>
</dbReference>
<dbReference type="Gene3D" id="3.30.230.20">
    <property type="entry name" value="lpxc deacetylase, domain 1"/>
    <property type="match status" value="1"/>
</dbReference>
<dbReference type="Gene3D" id="3.30.1700.10">
    <property type="entry name" value="lpxc deacetylase, domain 2"/>
    <property type="match status" value="1"/>
</dbReference>
<dbReference type="HAMAP" id="MF_00388">
    <property type="entry name" value="LpxC"/>
    <property type="match status" value="1"/>
</dbReference>
<dbReference type="InterPro" id="IPR020568">
    <property type="entry name" value="Ribosomal_Su5_D2-typ_SF"/>
</dbReference>
<dbReference type="InterPro" id="IPR004463">
    <property type="entry name" value="UDP-acyl_GlcNac_deAcase"/>
</dbReference>
<dbReference type="InterPro" id="IPR011334">
    <property type="entry name" value="UDP-acyl_GlcNac_deAcase_C"/>
</dbReference>
<dbReference type="InterPro" id="IPR015870">
    <property type="entry name" value="UDP-acyl_N-AcGlcN_deAcase_N"/>
</dbReference>
<dbReference type="NCBIfam" id="TIGR00325">
    <property type="entry name" value="lpxC"/>
    <property type="match status" value="1"/>
</dbReference>
<dbReference type="PANTHER" id="PTHR33694">
    <property type="entry name" value="UDP-3-O-ACYL-N-ACETYLGLUCOSAMINE DEACETYLASE 1, MITOCHONDRIAL-RELATED"/>
    <property type="match status" value="1"/>
</dbReference>
<dbReference type="PANTHER" id="PTHR33694:SF1">
    <property type="entry name" value="UDP-3-O-ACYL-N-ACETYLGLUCOSAMINE DEACETYLASE 1, MITOCHONDRIAL-RELATED"/>
    <property type="match status" value="1"/>
</dbReference>
<dbReference type="Pfam" id="PF03331">
    <property type="entry name" value="LpxC"/>
    <property type="match status" value="1"/>
</dbReference>
<dbReference type="SUPFAM" id="SSF54211">
    <property type="entry name" value="Ribosomal protein S5 domain 2-like"/>
    <property type="match status" value="2"/>
</dbReference>
<comment type="function">
    <text evidence="1">Catalyzes the hydrolysis of UDP-3-O-myristoyl-N-acetylglucosamine to form UDP-3-O-myristoylglucosamine and acetate, the committed step in lipid A biosynthesis.</text>
</comment>
<comment type="catalytic activity">
    <reaction evidence="1">
        <text>a UDP-3-O-[(3R)-3-hydroxyacyl]-N-acetyl-alpha-D-glucosamine + H2O = a UDP-3-O-[(3R)-3-hydroxyacyl]-alpha-D-glucosamine + acetate</text>
        <dbReference type="Rhea" id="RHEA:67816"/>
        <dbReference type="ChEBI" id="CHEBI:15377"/>
        <dbReference type="ChEBI" id="CHEBI:30089"/>
        <dbReference type="ChEBI" id="CHEBI:137740"/>
        <dbReference type="ChEBI" id="CHEBI:173225"/>
        <dbReference type="EC" id="3.5.1.108"/>
    </reaction>
</comment>
<comment type="cofactor">
    <cofactor evidence="1">
        <name>Zn(2+)</name>
        <dbReference type="ChEBI" id="CHEBI:29105"/>
    </cofactor>
</comment>
<comment type="pathway">
    <text evidence="1">Glycolipid biosynthesis; lipid IV(A) biosynthesis; lipid IV(A) from (3R)-3-hydroxytetradecanoyl-[acyl-carrier-protein] and UDP-N-acetyl-alpha-D-glucosamine: step 2/6.</text>
</comment>
<comment type="similarity">
    <text evidence="1">Belongs to the LpxC family.</text>
</comment>
<accession>A9KY34</accession>
<organism>
    <name type="scientific">Shewanella baltica (strain OS195)</name>
    <dbReference type="NCBI Taxonomy" id="399599"/>
    <lineage>
        <taxon>Bacteria</taxon>
        <taxon>Pseudomonadati</taxon>
        <taxon>Pseudomonadota</taxon>
        <taxon>Gammaproteobacteria</taxon>
        <taxon>Alteromonadales</taxon>
        <taxon>Shewanellaceae</taxon>
        <taxon>Shewanella</taxon>
    </lineage>
</organism>
<protein>
    <recommendedName>
        <fullName evidence="1">UDP-3-O-acyl-N-acetylglucosamine deacetylase</fullName>
        <shortName evidence="1">UDP-3-O-acyl-GlcNAc deacetylase</shortName>
        <ecNumber evidence="1">3.5.1.108</ecNumber>
    </recommendedName>
    <alternativeName>
        <fullName evidence="1">UDP-3-O-[R-3-hydroxymyristoyl]-N-acetylglucosamine deacetylase</fullName>
    </alternativeName>
</protein>
<reference key="1">
    <citation type="submission" date="2007-11" db="EMBL/GenBank/DDBJ databases">
        <title>Complete sequence of chromosome of Shewanella baltica OS195.</title>
        <authorList>
            <consortium name="US DOE Joint Genome Institute"/>
            <person name="Copeland A."/>
            <person name="Lucas S."/>
            <person name="Lapidus A."/>
            <person name="Barry K."/>
            <person name="Glavina del Rio T."/>
            <person name="Dalin E."/>
            <person name="Tice H."/>
            <person name="Pitluck S."/>
            <person name="Chain P."/>
            <person name="Malfatti S."/>
            <person name="Shin M."/>
            <person name="Vergez L."/>
            <person name="Schmutz J."/>
            <person name="Larimer F."/>
            <person name="Land M."/>
            <person name="Hauser L."/>
            <person name="Kyrpides N."/>
            <person name="Kim E."/>
            <person name="Brettar I."/>
            <person name="Rodrigues J."/>
            <person name="Konstantinidis K."/>
            <person name="Klappenbach J."/>
            <person name="Hofle M."/>
            <person name="Tiedje J."/>
            <person name="Richardson P."/>
        </authorList>
    </citation>
    <scope>NUCLEOTIDE SEQUENCE [LARGE SCALE GENOMIC DNA]</scope>
    <source>
        <strain>OS195</strain>
    </source>
</reference>
<feature type="chain" id="PRO_1000080227" description="UDP-3-O-acyl-N-acetylglucosamine deacetylase">
    <location>
        <begin position="1"/>
        <end position="306"/>
    </location>
</feature>
<feature type="active site" description="Proton donor" evidence="1">
    <location>
        <position position="265"/>
    </location>
</feature>
<feature type="binding site" evidence="1">
    <location>
        <position position="79"/>
    </location>
    <ligand>
        <name>Zn(2+)</name>
        <dbReference type="ChEBI" id="CHEBI:29105"/>
    </ligand>
</feature>
<feature type="binding site" evidence="1">
    <location>
        <position position="238"/>
    </location>
    <ligand>
        <name>Zn(2+)</name>
        <dbReference type="ChEBI" id="CHEBI:29105"/>
    </ligand>
</feature>
<feature type="binding site" evidence="1">
    <location>
        <position position="242"/>
    </location>
    <ligand>
        <name>Zn(2+)</name>
        <dbReference type="ChEBI" id="CHEBI:29105"/>
    </ligand>
</feature>
<sequence length="306" mass="33605">MIFQRTVQKMVKTTGVGLHSGNKVTLSIMPAPVNSGIVLVRTDLSPAVAIPAKAEQVRETTMCTALVNDEGIRISTIEHLFAALAGLGIDNAVIEVDAPEIPIMDGSASPFVFLLQSAGIKEQAAPKKYLKIKRPVRVEDGDKWAELKPFKGFRVNFKIDFAHPEIARSQQHVVMDFSTSAFVKDISRARTFGFMRDIEYLRANNLALGGSMENAVVLDEYRVLNPDGLRYEDEFVKHKILDAFGDLYVAGHAILGEFTAYKTGHALNNQLVRALLAQQDAWELVSFEKEADVPVSFTVPGGAVFA</sequence>
<name>LPXC_SHEB9</name>